<organism>
    <name type="scientific">Brucella suis biovar 1 (strain 1330)</name>
    <dbReference type="NCBI Taxonomy" id="204722"/>
    <lineage>
        <taxon>Bacteria</taxon>
        <taxon>Pseudomonadati</taxon>
        <taxon>Pseudomonadota</taxon>
        <taxon>Alphaproteobacteria</taxon>
        <taxon>Hyphomicrobiales</taxon>
        <taxon>Brucellaceae</taxon>
        <taxon>Brucella/Ochrobactrum group</taxon>
        <taxon>Brucella</taxon>
    </lineage>
</organism>
<comment type="function">
    <text evidence="1">Forms passive diffusion pores that allow small molecular weight hydrophilic materials across the outer membrane.</text>
</comment>
<comment type="subunit">
    <text evidence="1">Homotrimer.</text>
</comment>
<comment type="subcellular location">
    <subcellularLocation>
        <location evidence="1">Cell outer membrane</location>
        <topology evidence="1">Multi-pass membrane protein</topology>
    </subcellularLocation>
</comment>
<comment type="domain">
    <text evidence="1">Consists of 16-stranded beta-barrel sheets, with large surface-exposed loops, that form a transmembrane pore at the center of each barrel. The pore is partially ocluded by a peptide loop that folds into the pore lumen.</text>
</comment>
<comment type="miscellaneous">
    <text evidence="1">The pore formed by Omp2a is larger than the one formed by Omp2b. Omp2b pores have optimal permeability to allow growth and protection against harmful compounds. The larger pore formed by Omp2a may be advantageous for intracellular growth, when the bacterium is competing with the host cell for nutrients whose concentration is particularly low within the phagosome.</text>
</comment>
<comment type="similarity">
    <text evidence="3">Belongs to the alphaproteobacteria porin family.</text>
</comment>
<comment type="sequence caution" evidence="3">
    <conflict type="erroneous initiation">
        <sequence resource="EMBL-CDS" id="AAA67799"/>
    </conflict>
    <text>Extended N-terminus.</text>
</comment>
<comment type="sequence caution" evidence="3">
    <conflict type="erroneous initiation">
        <sequence resource="EMBL-CDS" id="AAN29568"/>
    </conflict>
    <text>Extended N-terminus.</text>
</comment>
<comment type="sequence caution" evidence="3">
    <conflict type="erroneous initiation">
        <sequence resource="EMBL-CDS" id="AEM17985"/>
    </conflict>
    <text>Extended N-terminus.</text>
</comment>
<protein>
    <recommendedName>
        <fullName>Porin Omp2b</fullName>
    </recommendedName>
</protein>
<evidence type="ECO:0000250" key="1">
    <source>
        <dbReference type="UniProtKB" id="Q44665"/>
    </source>
</evidence>
<evidence type="ECO:0000255" key="2"/>
<evidence type="ECO:0000305" key="3"/>
<sequence length="362" mass="38742">MNIKSLLLGSAAALVAASGAQAADAIVAPEPEAVEYVRVCDAYGAGYFYIPGTETCLRVHGYVRYDVKGGDDVYSGTDRNGWDKSARFALRVSTGSETELGTLKTFTELRFNYAANNSGVDGKYGNETSSGTVMEFAYIQLGGLRVGIDESEFHTFTGYLGDVINDDVISAGSYRTGKISYTFTGGNGFSAVIALEQGGDNDGGYTGTTNYRIDGYMPDVVGGLKYAGGWGSIAGVVAYDSVIEEWAAKVRGDVNITDQFSVWLQGAYSSAATPDQNYGQWGGDWAVWGGLKYQATQKAAFNLQAAHDDWGKTAVTANVAYELVPGFTVTPEVSYTKFGGEWKNTVAEDNAWGGIVRFQRSF</sequence>
<accession>P0DI95</accession>
<accession>G0K7Y0</accession>
<accession>Q2KMJ8</accession>
<accession>Q2KMJ9</accession>
<accession>Q2KMK0</accession>
<accession>Q2KMK1</accession>
<accession>Q2KMK2</accession>
<accession>Q2KMK3</accession>
<accession>Q2KMK4</accession>
<accession>Q45428</accession>
<accession>Q7CEH8</accession>
<accession>Q9KH74</accession>
<gene>
    <name type="primary">omp2b</name>
    <name type="ordered locus">BR0639</name>
    <name type="ordered locus">BS1330_I0635</name>
</gene>
<dbReference type="EMBL" id="U26443">
    <property type="protein sequence ID" value="AAA67799.1"/>
    <property type="status" value="ALT_INIT"/>
    <property type="molecule type" value="Genomic_DNA"/>
</dbReference>
<dbReference type="EMBL" id="AE014291">
    <property type="protein sequence ID" value="AAN29568.1"/>
    <property type="status" value="ALT_INIT"/>
    <property type="molecule type" value="Genomic_DNA"/>
</dbReference>
<dbReference type="EMBL" id="CP002997">
    <property type="protein sequence ID" value="AEM17985.1"/>
    <property type="status" value="ALT_INIT"/>
    <property type="molecule type" value="Genomic_DNA"/>
</dbReference>
<dbReference type="RefSeq" id="WP_006278302.1">
    <property type="nucleotide sequence ID" value="NC_004310.3"/>
</dbReference>
<dbReference type="SMR" id="P0DI95"/>
<dbReference type="GeneID" id="45051725"/>
<dbReference type="KEGG" id="bms:BR0639"/>
<dbReference type="KEGG" id="bsi:BS1330_I0635"/>
<dbReference type="HOGENOM" id="CLU_044836_0_0_5"/>
<dbReference type="PhylomeDB" id="P0DI95"/>
<dbReference type="Proteomes" id="UP000007104">
    <property type="component" value="Chromosome I"/>
</dbReference>
<dbReference type="GO" id="GO:0009279">
    <property type="term" value="C:cell outer membrane"/>
    <property type="evidence" value="ECO:0007669"/>
    <property type="project" value="UniProtKB-SubCell"/>
</dbReference>
<dbReference type="GO" id="GO:0046930">
    <property type="term" value="C:pore complex"/>
    <property type="evidence" value="ECO:0007669"/>
    <property type="project" value="UniProtKB-KW"/>
</dbReference>
<dbReference type="GO" id="GO:0015288">
    <property type="term" value="F:porin activity"/>
    <property type="evidence" value="ECO:0007669"/>
    <property type="project" value="UniProtKB-KW"/>
</dbReference>
<dbReference type="GO" id="GO:0006811">
    <property type="term" value="P:monoatomic ion transport"/>
    <property type="evidence" value="ECO:0007669"/>
    <property type="project" value="UniProtKB-KW"/>
</dbReference>
<dbReference type="InterPro" id="IPR003684">
    <property type="entry name" value="Porin_alphabac"/>
</dbReference>
<dbReference type="Pfam" id="PF02530">
    <property type="entry name" value="Porin_2"/>
    <property type="match status" value="1"/>
</dbReference>
<dbReference type="SUPFAM" id="SSF56935">
    <property type="entry name" value="Porins"/>
    <property type="match status" value="1"/>
</dbReference>
<keyword id="KW-0998">Cell outer membrane</keyword>
<keyword id="KW-0406">Ion transport</keyword>
<keyword id="KW-0472">Membrane</keyword>
<keyword id="KW-0626">Porin</keyword>
<keyword id="KW-0732">Signal</keyword>
<keyword id="KW-0812">Transmembrane</keyword>
<keyword id="KW-1134">Transmembrane beta strand</keyword>
<keyword id="KW-0813">Transport</keyword>
<reference key="1">
    <citation type="journal article" date="1996" name="Int. J. Syst. Bacteriol.">
        <title>Species-specific sequences at the omp2 locus of Brucella type strains.</title>
        <authorList>
            <person name="Ficht T.A."/>
            <person name="Husseinen H.S."/>
            <person name="Derr J."/>
            <person name="Bearden S.W."/>
        </authorList>
    </citation>
    <scope>NUCLEOTIDE SEQUENCE [GENOMIC DNA]</scope>
    <source>
        <strain>1330</strain>
    </source>
</reference>
<reference key="2">
    <citation type="journal article" date="2002" name="Proc. Natl. Acad. Sci. U.S.A.">
        <title>The Brucella suis genome reveals fundamental similarities between animal and plant pathogens and symbionts.</title>
        <authorList>
            <person name="Paulsen I.T."/>
            <person name="Seshadri R."/>
            <person name="Nelson K.E."/>
            <person name="Eisen J.A."/>
            <person name="Heidelberg J.F."/>
            <person name="Read T.D."/>
            <person name="Dodson R.J."/>
            <person name="Umayam L.A."/>
            <person name="Brinkac L.M."/>
            <person name="Beanan M.J."/>
            <person name="Daugherty S.C."/>
            <person name="DeBoy R.T."/>
            <person name="Durkin A.S."/>
            <person name="Kolonay J.F."/>
            <person name="Madupu R."/>
            <person name="Nelson W.C."/>
            <person name="Ayodeji B."/>
            <person name="Kraul M."/>
            <person name="Shetty J."/>
            <person name="Malek J.A."/>
            <person name="Van Aken S.E."/>
            <person name="Riedmuller S."/>
            <person name="Tettelin H."/>
            <person name="Gill S.R."/>
            <person name="White O."/>
            <person name="Salzberg S.L."/>
            <person name="Hoover D.L."/>
            <person name="Lindler L.E."/>
            <person name="Halling S.M."/>
            <person name="Boyle S.M."/>
            <person name="Fraser C.M."/>
        </authorList>
    </citation>
    <scope>NUCLEOTIDE SEQUENCE [LARGE SCALE GENOMIC DNA]</scope>
    <source>
        <strain>1330</strain>
    </source>
</reference>
<reference key="3">
    <citation type="journal article" date="2011" name="J. Bacteriol.">
        <title>Revised genome sequence of Brucella suis 1330.</title>
        <authorList>
            <person name="Tae H."/>
            <person name="Shallom S."/>
            <person name="Settlage R."/>
            <person name="Preston D."/>
            <person name="Adams L.G."/>
            <person name="Garner H.R."/>
        </authorList>
    </citation>
    <scope>NUCLEOTIDE SEQUENCE [LARGE SCALE GENOMIC DNA]</scope>
    <source>
        <strain>1330</strain>
    </source>
</reference>
<name>OMP2B_BRUSU</name>
<proteinExistence type="inferred from homology"/>
<feature type="signal peptide" evidence="2">
    <location>
        <begin position="1"/>
        <end position="22"/>
    </location>
</feature>
<feature type="chain" id="PRO_0000354022" description="Porin Omp2b">
    <location>
        <begin position="23"/>
        <end position="362"/>
    </location>
</feature>